<keyword id="KW-0158">Chromosome</keyword>
<keyword id="KW-0175">Coiled coil</keyword>
<keyword id="KW-0227">DNA damage</keyword>
<keyword id="KW-0234">DNA repair</keyword>
<keyword id="KW-0235">DNA replication</keyword>
<keyword id="KW-0539">Nucleus</keyword>
<keyword id="KW-1185">Reference proteome</keyword>
<keyword id="KW-0804">Transcription</keyword>
<keyword id="KW-0805">Transcription regulation</keyword>
<sequence>MADSRNGNARAPPSGVPPKAGNTYSIDVKNFISRARALYEHWKKHSADLWGSADALAIATPPASDDLRYLKSSALNIWLLGYEFPDTIMVFTKKQIHFLCSRNKASLLEVVKKPAHDELKLDVIMHVKPKGDDGTGLMDAIFRAIRDLSRGDGNDSQVVGHIAREAPEGKLLETWTERLKNANFQFVDITGGLSDLFAVKDDTEVMSVKKAAYLAYSVMKNVVVPNLESAIDEEKDVTHSALMDLTEKAILEPTKASVKLKPENVDICYPPIFQSGGKFDLKPSAASNDELLTYDPASIIICAVGARYNSYCSNVARTYLIDATSLQSKAYEVLLKAHEAAIDALRSGRKINTVYQAALSVVEKNAPEFVDKLTKSAGTGIGLEFRESGLNINAKNDKVLRPKMAFNVSLGFQNLECESESRSKNKKFSLLLADTVLVTDQKPELLTKCSKSVKDVAYSFKEDEEEEKPRKKARTSGSENYITKTALRSDDHVVSKEELRKQHQAELARQKNEETARRLAGDSSGAGDSRSTAKTSADVVAYKNVNDMPHKELMIQVDTRNEAVLLPIYGSLVPFHVATIRTVSGNQDTNRNCYIRIIFNVPGTPFNPHDSNSLKNQGAIYLKEVSFRTKDSRHSSEVTQQIKTLRRQVMARESERAERATLVTQEKLQLAGNKFKPLRLSELWIRPPFSGRKKIPGTLEAHANGFRYSTTRPDERVDVLFANIKHAFFQPAEKEMITLLHFHLHNHIMVGTKKTKDVQFYVEVMDVVQSLGGGRRSAYDPDEIDEEQRERDRKNKINMDFNHFANRVNDMWQLPQFASLDLEFDQPLRELGFHGVPHKTSAFIIPTSSCLVELIEYPFLVVSLSEIEIVNLERVGFGQKNFDMAIIFKDFKKDVLRVDSVPTSSLEGIKEWLDTTDIKYYESKLNLNWRQILKTITDDPQSFIDDGGWEFLNLDGSDSESGGSEESDKGYEPSDVEVESESEDEASESESLVESDDDEEEDSEQESEEEKGKTWDELEREATNADREHGVESDSEEERKRRKMKAFGKSRPGTSGGGGSSSMKNMPPSKRKHR</sequence>
<gene>
    <name type="primary">SPT16</name>
    <name type="ordered locus">At4g10710</name>
    <name type="ORF">T12H20.3</name>
</gene>
<organism>
    <name type="scientific">Arabidopsis thaliana</name>
    <name type="common">Mouse-ear cress</name>
    <dbReference type="NCBI Taxonomy" id="3702"/>
    <lineage>
        <taxon>Eukaryota</taxon>
        <taxon>Viridiplantae</taxon>
        <taxon>Streptophyta</taxon>
        <taxon>Embryophyta</taxon>
        <taxon>Tracheophyta</taxon>
        <taxon>Spermatophyta</taxon>
        <taxon>Magnoliopsida</taxon>
        <taxon>eudicotyledons</taxon>
        <taxon>Gunneridae</taxon>
        <taxon>Pentapetalae</taxon>
        <taxon>rosids</taxon>
        <taxon>malvids</taxon>
        <taxon>Brassicales</taxon>
        <taxon>Brassicaceae</taxon>
        <taxon>Camelineae</taxon>
        <taxon>Arabidopsis</taxon>
    </lineage>
</organism>
<dbReference type="EMBL" id="AF080119">
    <property type="protein sequence ID" value="AAC35521.1"/>
    <property type="molecule type" value="Genomic_DNA"/>
</dbReference>
<dbReference type="EMBL" id="AL161518">
    <property type="protein sequence ID" value="CAB81172.1"/>
    <property type="molecule type" value="Genomic_DNA"/>
</dbReference>
<dbReference type="EMBL" id="CP002687">
    <property type="protein sequence ID" value="AEE82919.1"/>
    <property type="molecule type" value="Genomic_DNA"/>
</dbReference>
<dbReference type="EMBL" id="CP002687">
    <property type="protein sequence ID" value="ANM67190.1"/>
    <property type="molecule type" value="Genomic_DNA"/>
</dbReference>
<dbReference type="EMBL" id="AB493678">
    <property type="protein sequence ID" value="BAH30516.1"/>
    <property type="molecule type" value="mRNA"/>
</dbReference>
<dbReference type="PIR" id="T01906">
    <property type="entry name" value="T01906"/>
</dbReference>
<dbReference type="RefSeq" id="NP_001329034.1">
    <property type="nucleotide sequence ID" value="NM_001340681.1"/>
</dbReference>
<dbReference type="RefSeq" id="NP_192809.1">
    <property type="nucleotide sequence ID" value="NM_117139.3"/>
</dbReference>
<dbReference type="SMR" id="O82491"/>
<dbReference type="BioGRID" id="11964">
    <property type="interactions" value="27"/>
</dbReference>
<dbReference type="FunCoup" id="O82491">
    <property type="interactions" value="5000"/>
</dbReference>
<dbReference type="STRING" id="3702.O82491"/>
<dbReference type="iPTMnet" id="O82491"/>
<dbReference type="PaxDb" id="3702-AT4G10710.1"/>
<dbReference type="ProteomicsDB" id="234097"/>
<dbReference type="EnsemblPlants" id="AT4G10710.1">
    <property type="protein sequence ID" value="AT4G10710.1"/>
    <property type="gene ID" value="AT4G10710"/>
</dbReference>
<dbReference type="EnsemblPlants" id="AT4G10710.2">
    <property type="protein sequence ID" value="AT4G10710.2"/>
    <property type="gene ID" value="AT4G10710"/>
</dbReference>
<dbReference type="GeneID" id="826665"/>
<dbReference type="Gramene" id="AT4G10710.1">
    <property type="protein sequence ID" value="AT4G10710.1"/>
    <property type="gene ID" value="AT4G10710"/>
</dbReference>
<dbReference type="Gramene" id="AT4G10710.2">
    <property type="protein sequence ID" value="AT4G10710.2"/>
    <property type="gene ID" value="AT4G10710"/>
</dbReference>
<dbReference type="KEGG" id="ath:AT4G10710"/>
<dbReference type="Araport" id="AT4G10710"/>
<dbReference type="TAIR" id="AT4G10710">
    <property type="gene designation" value="SPT16"/>
</dbReference>
<dbReference type="eggNOG" id="KOG1189">
    <property type="taxonomic scope" value="Eukaryota"/>
</dbReference>
<dbReference type="HOGENOM" id="CLU_004627_1_0_1"/>
<dbReference type="InParanoid" id="O82491"/>
<dbReference type="OMA" id="AYSVMKN"/>
<dbReference type="OrthoDB" id="10251642at2759"/>
<dbReference type="PhylomeDB" id="O82491"/>
<dbReference type="CD-CODE" id="4299E36E">
    <property type="entry name" value="Nucleolus"/>
</dbReference>
<dbReference type="PRO" id="PR:O82491"/>
<dbReference type="Proteomes" id="UP000006548">
    <property type="component" value="Chromosome 4"/>
</dbReference>
<dbReference type="ExpressionAtlas" id="O82491">
    <property type="expression patterns" value="baseline and differential"/>
</dbReference>
<dbReference type="GO" id="GO:0000791">
    <property type="term" value="C:euchromatin"/>
    <property type="evidence" value="ECO:0000314"/>
    <property type="project" value="TAIR"/>
</dbReference>
<dbReference type="GO" id="GO:0035101">
    <property type="term" value="C:FACT complex"/>
    <property type="evidence" value="ECO:0000314"/>
    <property type="project" value="TAIR"/>
</dbReference>
<dbReference type="GO" id="GO:0005730">
    <property type="term" value="C:nucleolus"/>
    <property type="evidence" value="ECO:0007005"/>
    <property type="project" value="TAIR"/>
</dbReference>
<dbReference type="GO" id="GO:0005634">
    <property type="term" value="C:nucleus"/>
    <property type="evidence" value="ECO:0000314"/>
    <property type="project" value="TAIR"/>
</dbReference>
<dbReference type="GO" id="GO:0006281">
    <property type="term" value="P:DNA repair"/>
    <property type="evidence" value="ECO:0007669"/>
    <property type="project" value="UniProtKB-KW"/>
</dbReference>
<dbReference type="GO" id="GO:0006260">
    <property type="term" value="P:DNA replication"/>
    <property type="evidence" value="ECO:0007669"/>
    <property type="project" value="UniProtKB-KW"/>
</dbReference>
<dbReference type="GO" id="GO:0010228">
    <property type="term" value="P:vegetative to reproductive phase transition of meristem"/>
    <property type="evidence" value="ECO:0000315"/>
    <property type="project" value="TAIR"/>
</dbReference>
<dbReference type="CDD" id="cd01091">
    <property type="entry name" value="CDC68-like"/>
    <property type="match status" value="1"/>
</dbReference>
<dbReference type="FunFam" id="2.30.29.150:FF:000004">
    <property type="entry name" value="FACT complex subunit SPT16"/>
    <property type="match status" value="1"/>
</dbReference>
<dbReference type="FunFam" id="2.30.29.210:FF:000002">
    <property type="entry name" value="FACT complex subunit SPT16"/>
    <property type="match status" value="1"/>
</dbReference>
<dbReference type="FunFam" id="2.30.29.30:FF:000017">
    <property type="entry name" value="FACT complex subunit SPT16"/>
    <property type="match status" value="1"/>
</dbReference>
<dbReference type="FunFam" id="3.40.350.10:FF:000006">
    <property type="entry name" value="FACT complex subunit SPT16"/>
    <property type="match status" value="1"/>
</dbReference>
<dbReference type="FunFam" id="3.90.230.10:FF:000005">
    <property type="entry name" value="FACT complex subunit spt16"/>
    <property type="match status" value="1"/>
</dbReference>
<dbReference type="Gene3D" id="2.30.29.150">
    <property type="match status" value="1"/>
</dbReference>
<dbReference type="Gene3D" id="3.90.230.10">
    <property type="entry name" value="Creatinase/methionine aminopeptidase superfamily"/>
    <property type="match status" value="1"/>
</dbReference>
<dbReference type="Gene3D" id="3.40.350.10">
    <property type="entry name" value="Creatinase/prolidase N-terminal domain"/>
    <property type="match status" value="1"/>
</dbReference>
<dbReference type="Gene3D" id="2.30.29.210">
    <property type="entry name" value="FACT complex subunit Spt16p/Cdc68p"/>
    <property type="match status" value="1"/>
</dbReference>
<dbReference type="Gene3D" id="2.30.29.30">
    <property type="entry name" value="Pleckstrin-homology domain (PH domain)/Phosphotyrosine-binding domain (PTB)"/>
    <property type="match status" value="1"/>
</dbReference>
<dbReference type="InterPro" id="IPR029149">
    <property type="entry name" value="Creatin/AminoP/Spt16_N"/>
</dbReference>
<dbReference type="InterPro" id="IPR036005">
    <property type="entry name" value="Creatinase/aminopeptidase-like"/>
</dbReference>
<dbReference type="InterPro" id="IPR029148">
    <property type="entry name" value="FACT-SPT16_Nlobe"/>
</dbReference>
<dbReference type="InterPro" id="IPR056595">
    <property type="entry name" value="Fact-SPT16_PH"/>
</dbReference>
<dbReference type="InterPro" id="IPR048969">
    <property type="entry name" value="FACT_SPT16_C"/>
</dbReference>
<dbReference type="InterPro" id="IPR013953">
    <property type="entry name" value="FACT_SPT16_M"/>
</dbReference>
<dbReference type="InterPro" id="IPR000994">
    <property type="entry name" value="Pept_M24"/>
</dbReference>
<dbReference type="InterPro" id="IPR011993">
    <property type="entry name" value="PH-like_dom_sf"/>
</dbReference>
<dbReference type="InterPro" id="IPR013719">
    <property type="entry name" value="RTT106/SPT16-like_middle_dom"/>
</dbReference>
<dbReference type="InterPro" id="IPR040258">
    <property type="entry name" value="Spt16"/>
</dbReference>
<dbReference type="InterPro" id="IPR033825">
    <property type="entry name" value="Spt16_M24"/>
</dbReference>
<dbReference type="PANTHER" id="PTHR13980">
    <property type="entry name" value="CDC68 RELATED"/>
    <property type="match status" value="1"/>
</dbReference>
<dbReference type="PANTHER" id="PTHR13980:SF18">
    <property type="entry name" value="FACT COMPLEX SUBUNIT SPT16"/>
    <property type="match status" value="1"/>
</dbReference>
<dbReference type="Pfam" id="PF14826">
    <property type="entry name" value="FACT-Spt16_Nlob"/>
    <property type="match status" value="1"/>
</dbReference>
<dbReference type="Pfam" id="PF00557">
    <property type="entry name" value="Peptidase_M24"/>
    <property type="match status" value="1"/>
</dbReference>
<dbReference type="Pfam" id="PF24824">
    <property type="entry name" value="PH_SPT16"/>
    <property type="match status" value="1"/>
</dbReference>
<dbReference type="Pfam" id="PF08512">
    <property type="entry name" value="Rttp106-like_middle"/>
    <property type="match status" value="1"/>
</dbReference>
<dbReference type="Pfam" id="PF08644">
    <property type="entry name" value="SPT16"/>
    <property type="match status" value="1"/>
</dbReference>
<dbReference type="Pfam" id="PF21091">
    <property type="entry name" value="SPT16_C"/>
    <property type="match status" value="1"/>
</dbReference>
<dbReference type="SMART" id="SM01285">
    <property type="entry name" value="FACT-Spt16_Nlob"/>
    <property type="match status" value="1"/>
</dbReference>
<dbReference type="SMART" id="SM01287">
    <property type="entry name" value="Rtt106"/>
    <property type="match status" value="1"/>
</dbReference>
<dbReference type="SMART" id="SM01286">
    <property type="entry name" value="SPT16"/>
    <property type="match status" value="1"/>
</dbReference>
<dbReference type="SUPFAM" id="SSF55920">
    <property type="entry name" value="Creatinase/aminopeptidase"/>
    <property type="match status" value="1"/>
</dbReference>
<feature type="chain" id="PRO_0000245175" description="FACT complex subunit SPT16">
    <location>
        <begin position="1"/>
        <end position="1074"/>
    </location>
</feature>
<feature type="region of interest" description="Disordered" evidence="2">
    <location>
        <begin position="1"/>
        <end position="21"/>
    </location>
</feature>
<feature type="region of interest" description="Disordered" evidence="2">
    <location>
        <begin position="505"/>
        <end position="534"/>
    </location>
</feature>
<feature type="region of interest" description="Disordered" evidence="2">
    <location>
        <begin position="954"/>
        <end position="1074"/>
    </location>
</feature>
<feature type="coiled-coil region" evidence="1">
    <location>
        <begin position="493"/>
        <end position="520"/>
    </location>
</feature>
<feature type="coiled-coil region" evidence="1">
    <location>
        <begin position="637"/>
        <end position="658"/>
    </location>
</feature>
<feature type="coiled-coil region" evidence="1">
    <location>
        <begin position="782"/>
        <end position="802"/>
    </location>
</feature>
<feature type="compositionally biased region" description="Basic and acidic residues" evidence="2">
    <location>
        <begin position="505"/>
        <end position="520"/>
    </location>
</feature>
<feature type="compositionally biased region" description="Low complexity" evidence="2">
    <location>
        <begin position="955"/>
        <end position="964"/>
    </location>
</feature>
<feature type="compositionally biased region" description="Acidic residues" evidence="2">
    <location>
        <begin position="974"/>
        <end position="1009"/>
    </location>
</feature>
<feature type="compositionally biased region" description="Basic and acidic residues" evidence="2">
    <location>
        <begin position="1010"/>
        <end position="1032"/>
    </location>
</feature>
<comment type="function">
    <text evidence="5">Component of the FACT complex, a general chromatin factor that acts to reorganize nucleosomes. The FACT complex is involved in multiple processes that require DNA as a template such as mRNA elongation, DNA replication and DNA repair. During transcription elongation the FACT complex acts as a histone chaperone that both destabilizes and restores nucleosomal structure. It facilitates the passage of RNA polymerase II and transcription by promoting the dissociation of one histone H2A-H2B dimer from the nucleosome, then subsequently promotes the reestablishment of the nucleosome following the passage of RNA polymerase II (Probable).</text>
</comment>
<comment type="subunit">
    <text>Component of the FACT complex, a stable heterodimer of SPT16 and SSRP.</text>
</comment>
<comment type="subcellular location">
    <subcellularLocation>
        <location evidence="3">Nucleus</location>
    </subcellularLocation>
    <subcellularLocation>
        <location evidence="3">Chromosome</location>
    </subcellularLocation>
    <text>Colocalizes with RNA polymerase II on chromatin. Recruited to actively transcribed loci.</text>
</comment>
<comment type="tissue specificity">
    <text evidence="3">Widely expressed. Present in embryos, shoots and roots, whereas it is not present in terminally differentiated cells such as mature trichoblasts or cells of the root cap (at protein level).</text>
</comment>
<comment type="similarity">
    <text evidence="4">Belongs to the peptidase M24 family. SPT16 subfamily.</text>
</comment>
<comment type="caution">
    <text evidence="4">Although related to the peptidase M24 family, this protein lacks conserved active site residues suggesting that it may lack peptidase activity.</text>
</comment>
<reference key="1">
    <citation type="journal article" date="1999" name="Nature">
        <title>Sequence and analysis of chromosome 4 of the plant Arabidopsis thaliana.</title>
        <authorList>
            <person name="Mayer K.F.X."/>
            <person name="Schueller C."/>
            <person name="Wambutt R."/>
            <person name="Murphy G."/>
            <person name="Volckaert G."/>
            <person name="Pohl T."/>
            <person name="Duesterhoeft A."/>
            <person name="Stiekema W."/>
            <person name="Entian K.-D."/>
            <person name="Terryn N."/>
            <person name="Harris B."/>
            <person name="Ansorge W."/>
            <person name="Brandt P."/>
            <person name="Grivell L.A."/>
            <person name="Rieger M."/>
            <person name="Weichselgartner M."/>
            <person name="de Simone V."/>
            <person name="Obermaier B."/>
            <person name="Mache R."/>
            <person name="Mueller M."/>
            <person name="Kreis M."/>
            <person name="Delseny M."/>
            <person name="Puigdomenech P."/>
            <person name="Watson M."/>
            <person name="Schmidtheini T."/>
            <person name="Reichert B."/>
            <person name="Portetelle D."/>
            <person name="Perez-Alonso M."/>
            <person name="Boutry M."/>
            <person name="Bancroft I."/>
            <person name="Vos P."/>
            <person name="Hoheisel J."/>
            <person name="Zimmermann W."/>
            <person name="Wedler H."/>
            <person name="Ridley P."/>
            <person name="Langham S.-A."/>
            <person name="McCullagh B."/>
            <person name="Bilham L."/>
            <person name="Robben J."/>
            <person name="van der Schueren J."/>
            <person name="Grymonprez B."/>
            <person name="Chuang Y.-J."/>
            <person name="Vandenbussche F."/>
            <person name="Braeken M."/>
            <person name="Weltjens I."/>
            <person name="Voet M."/>
            <person name="Bastiaens I."/>
            <person name="Aert R."/>
            <person name="Defoor E."/>
            <person name="Weitzenegger T."/>
            <person name="Bothe G."/>
            <person name="Ramsperger U."/>
            <person name="Hilbert H."/>
            <person name="Braun M."/>
            <person name="Holzer E."/>
            <person name="Brandt A."/>
            <person name="Peters S."/>
            <person name="van Staveren M."/>
            <person name="Dirkse W."/>
            <person name="Mooijman P."/>
            <person name="Klein Lankhorst R."/>
            <person name="Rose M."/>
            <person name="Hauf J."/>
            <person name="Koetter P."/>
            <person name="Berneiser S."/>
            <person name="Hempel S."/>
            <person name="Feldpausch M."/>
            <person name="Lamberth S."/>
            <person name="Van den Daele H."/>
            <person name="De Keyser A."/>
            <person name="Buysshaert C."/>
            <person name="Gielen J."/>
            <person name="Villarroel R."/>
            <person name="De Clercq R."/>
            <person name="van Montagu M."/>
            <person name="Rogers J."/>
            <person name="Cronin A."/>
            <person name="Quail M.A."/>
            <person name="Bray-Allen S."/>
            <person name="Clark L."/>
            <person name="Doggett J."/>
            <person name="Hall S."/>
            <person name="Kay M."/>
            <person name="Lennard N."/>
            <person name="McLay K."/>
            <person name="Mayes R."/>
            <person name="Pettett A."/>
            <person name="Rajandream M.A."/>
            <person name="Lyne M."/>
            <person name="Benes V."/>
            <person name="Rechmann S."/>
            <person name="Borkova D."/>
            <person name="Bloecker H."/>
            <person name="Scharfe M."/>
            <person name="Grimm M."/>
            <person name="Loehnert T.-H."/>
            <person name="Dose S."/>
            <person name="de Haan M."/>
            <person name="Maarse A.C."/>
            <person name="Schaefer M."/>
            <person name="Mueller-Auer S."/>
            <person name="Gabel C."/>
            <person name="Fuchs M."/>
            <person name="Fartmann B."/>
            <person name="Granderath K."/>
            <person name="Dauner D."/>
            <person name="Herzl A."/>
            <person name="Neumann S."/>
            <person name="Argiriou A."/>
            <person name="Vitale D."/>
            <person name="Liguori R."/>
            <person name="Piravandi E."/>
            <person name="Massenet O."/>
            <person name="Quigley F."/>
            <person name="Clabauld G."/>
            <person name="Muendlein A."/>
            <person name="Felber R."/>
            <person name="Schnabl S."/>
            <person name="Hiller R."/>
            <person name="Schmidt W."/>
            <person name="Lecharny A."/>
            <person name="Aubourg S."/>
            <person name="Chefdor F."/>
            <person name="Cooke R."/>
            <person name="Berger C."/>
            <person name="Monfort A."/>
            <person name="Casacuberta E."/>
            <person name="Gibbons T."/>
            <person name="Weber N."/>
            <person name="Vandenbol M."/>
            <person name="Bargues M."/>
            <person name="Terol J."/>
            <person name="Torres A."/>
            <person name="Perez-Perez A."/>
            <person name="Purnelle B."/>
            <person name="Bent E."/>
            <person name="Johnson S."/>
            <person name="Tacon D."/>
            <person name="Jesse T."/>
            <person name="Heijnen L."/>
            <person name="Schwarz S."/>
            <person name="Scholler P."/>
            <person name="Heber S."/>
            <person name="Francs P."/>
            <person name="Bielke C."/>
            <person name="Frishman D."/>
            <person name="Haase D."/>
            <person name="Lemcke K."/>
            <person name="Mewes H.-W."/>
            <person name="Stocker S."/>
            <person name="Zaccaria P."/>
            <person name="Bevan M."/>
            <person name="Wilson R.K."/>
            <person name="de la Bastide M."/>
            <person name="Habermann K."/>
            <person name="Parnell L."/>
            <person name="Dedhia N."/>
            <person name="Gnoj L."/>
            <person name="Schutz K."/>
            <person name="Huang E."/>
            <person name="Spiegel L."/>
            <person name="Sekhon M."/>
            <person name="Murray J."/>
            <person name="Sheet P."/>
            <person name="Cordes M."/>
            <person name="Abu-Threideh J."/>
            <person name="Stoneking T."/>
            <person name="Kalicki J."/>
            <person name="Graves T."/>
            <person name="Harmon G."/>
            <person name="Edwards J."/>
            <person name="Latreille P."/>
            <person name="Courtney L."/>
            <person name="Cloud J."/>
            <person name="Abbott A."/>
            <person name="Scott K."/>
            <person name="Johnson D."/>
            <person name="Minx P."/>
            <person name="Bentley D."/>
            <person name="Fulton B."/>
            <person name="Miller N."/>
            <person name="Greco T."/>
            <person name="Kemp K."/>
            <person name="Kramer J."/>
            <person name="Fulton L."/>
            <person name="Mardis E."/>
            <person name="Dante M."/>
            <person name="Pepin K."/>
            <person name="Hillier L.W."/>
            <person name="Nelson J."/>
            <person name="Spieth J."/>
            <person name="Ryan E."/>
            <person name="Andrews S."/>
            <person name="Geisel C."/>
            <person name="Layman D."/>
            <person name="Du H."/>
            <person name="Ali J."/>
            <person name="Berghoff A."/>
            <person name="Jones K."/>
            <person name="Drone K."/>
            <person name="Cotton M."/>
            <person name="Joshu C."/>
            <person name="Antonoiu B."/>
            <person name="Zidanic M."/>
            <person name="Strong C."/>
            <person name="Sun H."/>
            <person name="Lamar B."/>
            <person name="Yordan C."/>
            <person name="Ma P."/>
            <person name="Zhong J."/>
            <person name="Preston R."/>
            <person name="Vil D."/>
            <person name="Shekher M."/>
            <person name="Matero A."/>
            <person name="Shah R."/>
            <person name="Swaby I.K."/>
            <person name="O'Shaughnessy A."/>
            <person name="Rodriguez M."/>
            <person name="Hoffman J."/>
            <person name="Till S."/>
            <person name="Granat S."/>
            <person name="Shohdy N."/>
            <person name="Hasegawa A."/>
            <person name="Hameed A."/>
            <person name="Lodhi M."/>
            <person name="Johnson A."/>
            <person name="Chen E."/>
            <person name="Marra M.A."/>
            <person name="Martienssen R."/>
            <person name="McCombie W.R."/>
        </authorList>
    </citation>
    <scope>NUCLEOTIDE SEQUENCE [LARGE SCALE GENOMIC DNA]</scope>
    <source>
        <strain>cv. Columbia</strain>
    </source>
</reference>
<reference key="2">
    <citation type="journal article" date="2017" name="Plant J.">
        <title>Araport11: a complete reannotation of the Arabidopsis thaliana reference genome.</title>
        <authorList>
            <person name="Cheng C.Y."/>
            <person name="Krishnakumar V."/>
            <person name="Chan A.P."/>
            <person name="Thibaud-Nissen F."/>
            <person name="Schobel S."/>
            <person name="Town C.D."/>
        </authorList>
    </citation>
    <scope>GENOME REANNOTATION</scope>
    <source>
        <strain>cv. Columbia</strain>
    </source>
</reference>
<reference key="3">
    <citation type="submission" date="2009-03" db="EMBL/GenBank/DDBJ databases">
        <title>ORF cloning and analysis of Arabidopsis transcription factor genes.</title>
        <authorList>
            <person name="Fujita M."/>
            <person name="Mizukado S."/>
            <person name="Seki M."/>
            <person name="Shinozaki K."/>
            <person name="Mitsuda N."/>
            <person name="Takiguchi Y."/>
            <person name="Takagi M."/>
        </authorList>
    </citation>
    <scope>NUCLEOTIDE SEQUENCE [LARGE SCALE MRNA]</scope>
</reference>
<reference key="4">
    <citation type="journal article" date="2004" name="Plant J.">
        <title>The chromatin remodelling complex FACT associates with actively transcribed regions of the Arabidopsis genome.</title>
        <authorList>
            <person name="Duroux M."/>
            <person name="Houben A."/>
            <person name="Ruzicka K."/>
            <person name="Friml J."/>
            <person name="Grasser K.D."/>
        </authorList>
    </citation>
    <scope>FUNCTION</scope>
    <scope>SUBCELLULAR LOCATION</scope>
    <scope>TISSUE SPECIFICITY</scope>
</reference>
<accession>O82491</accession>
<accession>C0SVH5</accession>
<proteinExistence type="evidence at protein level"/>
<protein>
    <recommendedName>
        <fullName>FACT complex subunit SPT16</fullName>
    </recommendedName>
    <alternativeName>
        <fullName>Facilitates chromatin transcription complex subunit SPT16</fullName>
    </alternativeName>
</protein>
<evidence type="ECO:0000255" key="1"/>
<evidence type="ECO:0000256" key="2">
    <source>
        <dbReference type="SAM" id="MobiDB-lite"/>
    </source>
</evidence>
<evidence type="ECO:0000269" key="3">
    <source>
    </source>
</evidence>
<evidence type="ECO:0000305" key="4"/>
<evidence type="ECO:0000305" key="5">
    <source>
    </source>
</evidence>
<name>SPT16_ARATH</name>